<comment type="function">
    <text evidence="1">Endonuclease that specifically degrades the RNA of RNA-DNA hybrids.</text>
</comment>
<comment type="catalytic activity">
    <reaction>
        <text>Endonucleolytic cleavage to 5'-phosphomonoester.</text>
        <dbReference type="EC" id="3.1.26.4"/>
    </reaction>
</comment>
<comment type="cofactor">
    <cofactor evidence="1">
        <name>Mg(2+)</name>
        <dbReference type="ChEBI" id="CHEBI:18420"/>
    </cofactor>
    <text evidence="1">Binds 1 Mg(2+) ion per subunit. May bind a second metal ion at a regulatory site, or after substrate binding.</text>
</comment>
<comment type="subunit">
    <text evidence="1">Monomer.</text>
</comment>
<comment type="subcellular location">
    <subcellularLocation>
        <location evidence="3">Cytoplasm</location>
    </subcellularLocation>
</comment>
<comment type="similarity">
    <text evidence="3">Belongs to the RNase H family.</text>
</comment>
<gene>
    <name type="primary">rnhA</name>
    <name type="synonym">rnh</name>
    <name type="ordered locus">HI_0138</name>
</gene>
<sequence>MPKQIEIFTDGSCLGNPGAGGIGAVLRYKQHEKTLSKGYFQTTNNRMELRAVIEALNTLKEPCLITLYSDSQYMKNGITKWIFNWKKNNWKASSGKPVKNQDLWIALDESIQRHKINWQWVKGHAGHRENEICDELAKKGAENPTLEDMGYIEE</sequence>
<accession>P43807</accession>
<protein>
    <recommendedName>
        <fullName>Ribonuclease HI</fullName>
        <shortName>RNase HI</shortName>
        <ecNumber>3.1.26.4</ecNumber>
    </recommendedName>
</protein>
<feature type="chain" id="PRO_0000195377" description="Ribonuclease HI">
    <location>
        <begin position="1"/>
        <end position="154"/>
    </location>
</feature>
<feature type="domain" description="RNase H type-1" evidence="2">
    <location>
        <begin position="1"/>
        <end position="142"/>
    </location>
</feature>
<feature type="binding site" evidence="1">
    <location>
        <position position="10"/>
    </location>
    <ligand>
        <name>Mg(2+)</name>
        <dbReference type="ChEBI" id="CHEBI:18420"/>
        <label>1</label>
    </ligand>
</feature>
<feature type="binding site" evidence="1">
    <location>
        <position position="10"/>
    </location>
    <ligand>
        <name>Mg(2+)</name>
        <dbReference type="ChEBI" id="CHEBI:18420"/>
        <label>2</label>
    </ligand>
</feature>
<feature type="binding site" evidence="1">
    <location>
        <position position="48"/>
    </location>
    <ligand>
        <name>Mg(2+)</name>
        <dbReference type="ChEBI" id="CHEBI:18420"/>
        <label>1</label>
    </ligand>
</feature>
<feature type="binding site" evidence="1">
    <location>
        <position position="70"/>
    </location>
    <ligand>
        <name>Mg(2+)</name>
        <dbReference type="ChEBI" id="CHEBI:18420"/>
        <label>1</label>
    </ligand>
</feature>
<feature type="binding site" evidence="1">
    <location>
        <position position="134"/>
    </location>
    <ligand>
        <name>Mg(2+)</name>
        <dbReference type="ChEBI" id="CHEBI:18420"/>
        <label>2</label>
    </ligand>
</feature>
<keyword id="KW-0963">Cytoplasm</keyword>
<keyword id="KW-0255">Endonuclease</keyword>
<keyword id="KW-0378">Hydrolase</keyword>
<keyword id="KW-0460">Magnesium</keyword>
<keyword id="KW-0479">Metal-binding</keyword>
<keyword id="KW-0540">Nuclease</keyword>
<keyword id="KW-1185">Reference proteome</keyword>
<proteinExistence type="inferred from homology"/>
<reference key="1">
    <citation type="journal article" date="1995" name="Science">
        <title>Whole-genome random sequencing and assembly of Haemophilus influenzae Rd.</title>
        <authorList>
            <person name="Fleischmann R.D."/>
            <person name="Adams M.D."/>
            <person name="White O."/>
            <person name="Clayton R.A."/>
            <person name="Kirkness E.F."/>
            <person name="Kerlavage A.R."/>
            <person name="Bult C.J."/>
            <person name="Tomb J.-F."/>
            <person name="Dougherty B.A."/>
            <person name="Merrick J.M."/>
            <person name="McKenney K."/>
            <person name="Sutton G.G."/>
            <person name="FitzHugh W."/>
            <person name="Fields C.A."/>
            <person name="Gocayne J.D."/>
            <person name="Scott J.D."/>
            <person name="Shirley R."/>
            <person name="Liu L.-I."/>
            <person name="Glodek A."/>
            <person name="Kelley J.M."/>
            <person name="Weidman J.F."/>
            <person name="Phillips C.A."/>
            <person name="Spriggs T."/>
            <person name="Hedblom E."/>
            <person name="Cotton M.D."/>
            <person name="Utterback T.R."/>
            <person name="Hanna M.C."/>
            <person name="Nguyen D.T."/>
            <person name="Saudek D.M."/>
            <person name="Brandon R.C."/>
            <person name="Fine L.D."/>
            <person name="Fritchman J.L."/>
            <person name="Fuhrmann J.L."/>
            <person name="Geoghagen N.S.M."/>
            <person name="Gnehm C.L."/>
            <person name="McDonald L.A."/>
            <person name="Small K.V."/>
            <person name="Fraser C.M."/>
            <person name="Smith H.O."/>
            <person name="Venter J.C."/>
        </authorList>
    </citation>
    <scope>NUCLEOTIDE SEQUENCE [LARGE SCALE GENOMIC DNA]</scope>
    <source>
        <strain>ATCC 51907 / DSM 11121 / KW20 / Rd</strain>
    </source>
</reference>
<reference key="2">
    <citation type="submission" date="1993-03" db="EMBL/GenBank/DDBJ databases">
        <authorList>
            <person name="Mizrahi V."/>
            <person name="Dudding L.R."/>
        </authorList>
    </citation>
    <scope>NUCLEOTIDE SEQUENCE [GENOMIC DNA] OF 84-123</scope>
</reference>
<evidence type="ECO:0000250" key="1"/>
<evidence type="ECO:0000255" key="2">
    <source>
        <dbReference type="PROSITE-ProRule" id="PRU00408"/>
    </source>
</evidence>
<evidence type="ECO:0000305" key="3"/>
<organism>
    <name type="scientific">Haemophilus influenzae (strain ATCC 51907 / DSM 11121 / KW20 / Rd)</name>
    <dbReference type="NCBI Taxonomy" id="71421"/>
    <lineage>
        <taxon>Bacteria</taxon>
        <taxon>Pseudomonadati</taxon>
        <taxon>Pseudomonadota</taxon>
        <taxon>Gammaproteobacteria</taxon>
        <taxon>Pasteurellales</taxon>
        <taxon>Pasteurellaceae</taxon>
        <taxon>Haemophilus</taxon>
    </lineage>
</organism>
<name>RNH_HAEIN</name>
<dbReference type="EC" id="3.1.26.4"/>
<dbReference type="EMBL" id="L42023">
    <property type="protein sequence ID" value="AAC21809.1"/>
    <property type="molecule type" value="Genomic_DNA"/>
</dbReference>
<dbReference type="EMBL" id="L11915">
    <property type="protein sequence ID" value="AAA25000.1"/>
    <property type="molecule type" value="Genomic_DNA"/>
</dbReference>
<dbReference type="PIR" id="C64050">
    <property type="entry name" value="C64050"/>
</dbReference>
<dbReference type="RefSeq" id="NP_438307.1">
    <property type="nucleotide sequence ID" value="NC_000907.1"/>
</dbReference>
<dbReference type="SMR" id="P43807"/>
<dbReference type="STRING" id="71421.HI_0138"/>
<dbReference type="EnsemblBacteria" id="AAC21809">
    <property type="protein sequence ID" value="AAC21809"/>
    <property type="gene ID" value="HI_0138"/>
</dbReference>
<dbReference type="KEGG" id="hin:HI_0138"/>
<dbReference type="PATRIC" id="fig|71421.8.peg.140"/>
<dbReference type="eggNOG" id="COG0328">
    <property type="taxonomic scope" value="Bacteria"/>
</dbReference>
<dbReference type="HOGENOM" id="CLU_030894_6_0_6"/>
<dbReference type="OrthoDB" id="7845843at2"/>
<dbReference type="PhylomeDB" id="P43807"/>
<dbReference type="BioCyc" id="HINF71421:G1GJ1-150-MONOMER"/>
<dbReference type="Proteomes" id="UP000000579">
    <property type="component" value="Chromosome"/>
</dbReference>
<dbReference type="GO" id="GO:0005737">
    <property type="term" value="C:cytoplasm"/>
    <property type="evidence" value="ECO:0007669"/>
    <property type="project" value="UniProtKB-SubCell"/>
</dbReference>
<dbReference type="GO" id="GO:0000287">
    <property type="term" value="F:magnesium ion binding"/>
    <property type="evidence" value="ECO:0007669"/>
    <property type="project" value="UniProtKB-UniRule"/>
</dbReference>
<dbReference type="GO" id="GO:0003676">
    <property type="term" value="F:nucleic acid binding"/>
    <property type="evidence" value="ECO:0007669"/>
    <property type="project" value="InterPro"/>
</dbReference>
<dbReference type="GO" id="GO:0004523">
    <property type="term" value="F:RNA-DNA hybrid ribonuclease activity"/>
    <property type="evidence" value="ECO:0000318"/>
    <property type="project" value="GO_Central"/>
</dbReference>
<dbReference type="GO" id="GO:0043137">
    <property type="term" value="P:DNA replication, removal of RNA primer"/>
    <property type="evidence" value="ECO:0000318"/>
    <property type="project" value="GO_Central"/>
</dbReference>
<dbReference type="CDD" id="cd09278">
    <property type="entry name" value="RNase_HI_prokaryote_like"/>
    <property type="match status" value="1"/>
</dbReference>
<dbReference type="FunFam" id="3.30.420.10:FF:000008">
    <property type="entry name" value="Ribonuclease H"/>
    <property type="match status" value="1"/>
</dbReference>
<dbReference type="Gene3D" id="3.30.420.10">
    <property type="entry name" value="Ribonuclease H-like superfamily/Ribonuclease H"/>
    <property type="match status" value="1"/>
</dbReference>
<dbReference type="HAMAP" id="MF_00042">
    <property type="entry name" value="RNase_H"/>
    <property type="match status" value="1"/>
</dbReference>
<dbReference type="InterPro" id="IPR050092">
    <property type="entry name" value="RNase_H"/>
</dbReference>
<dbReference type="InterPro" id="IPR012337">
    <property type="entry name" value="RNaseH-like_sf"/>
</dbReference>
<dbReference type="InterPro" id="IPR002156">
    <property type="entry name" value="RNaseH_domain"/>
</dbReference>
<dbReference type="InterPro" id="IPR036397">
    <property type="entry name" value="RNaseH_sf"/>
</dbReference>
<dbReference type="InterPro" id="IPR022892">
    <property type="entry name" value="RNaseHI"/>
</dbReference>
<dbReference type="NCBIfam" id="NF001236">
    <property type="entry name" value="PRK00203.1"/>
    <property type="match status" value="1"/>
</dbReference>
<dbReference type="PANTHER" id="PTHR10642">
    <property type="entry name" value="RIBONUCLEASE H1"/>
    <property type="match status" value="1"/>
</dbReference>
<dbReference type="PANTHER" id="PTHR10642:SF26">
    <property type="entry name" value="RIBONUCLEASE H1"/>
    <property type="match status" value="1"/>
</dbReference>
<dbReference type="Pfam" id="PF00075">
    <property type="entry name" value="RNase_H"/>
    <property type="match status" value="1"/>
</dbReference>
<dbReference type="SUPFAM" id="SSF53098">
    <property type="entry name" value="Ribonuclease H-like"/>
    <property type="match status" value="1"/>
</dbReference>
<dbReference type="PROSITE" id="PS50879">
    <property type="entry name" value="RNASE_H_1"/>
    <property type="match status" value="1"/>
</dbReference>